<gene>
    <name evidence="1" type="primary">epd</name>
    <name type="ordered locus">STM3070</name>
</gene>
<dbReference type="EC" id="1.2.1.72" evidence="1"/>
<dbReference type="EMBL" id="AE006468">
    <property type="protein sequence ID" value="AAL21945.1"/>
    <property type="molecule type" value="Genomic_DNA"/>
</dbReference>
<dbReference type="RefSeq" id="NP_461986.1">
    <property type="nucleotide sequence ID" value="NC_003197.2"/>
</dbReference>
<dbReference type="RefSeq" id="WP_000218338.1">
    <property type="nucleotide sequence ID" value="NC_003197.2"/>
</dbReference>
<dbReference type="SMR" id="Q7CPU5"/>
<dbReference type="STRING" id="99287.STM3070"/>
<dbReference type="PaxDb" id="99287-STM3070"/>
<dbReference type="GeneID" id="1254593"/>
<dbReference type="KEGG" id="stm:STM3070"/>
<dbReference type="PATRIC" id="fig|99287.12.peg.3253"/>
<dbReference type="HOGENOM" id="CLU_030140_0_0_6"/>
<dbReference type="OMA" id="ENMVKIM"/>
<dbReference type="PhylomeDB" id="Q7CPU5"/>
<dbReference type="BioCyc" id="SENT99287:STM3070-MONOMER"/>
<dbReference type="UniPathway" id="UPA00244">
    <property type="reaction ID" value="UER00309"/>
</dbReference>
<dbReference type="Proteomes" id="UP000001014">
    <property type="component" value="Chromosome"/>
</dbReference>
<dbReference type="GO" id="GO:0005829">
    <property type="term" value="C:cytosol"/>
    <property type="evidence" value="ECO:0000318"/>
    <property type="project" value="GO_Central"/>
</dbReference>
<dbReference type="GO" id="GO:0048001">
    <property type="term" value="F:erythrose-4-phosphate dehydrogenase activity"/>
    <property type="evidence" value="ECO:0007669"/>
    <property type="project" value="UniProtKB-UniRule"/>
</dbReference>
<dbReference type="GO" id="GO:0004365">
    <property type="term" value="F:glyceraldehyde-3-phosphate dehydrogenase (NAD+) (phosphorylating) activity"/>
    <property type="evidence" value="ECO:0000318"/>
    <property type="project" value="GO_Central"/>
</dbReference>
<dbReference type="GO" id="GO:0051287">
    <property type="term" value="F:NAD binding"/>
    <property type="evidence" value="ECO:0000318"/>
    <property type="project" value="GO_Central"/>
</dbReference>
<dbReference type="GO" id="GO:0050661">
    <property type="term" value="F:NADP binding"/>
    <property type="evidence" value="ECO:0007669"/>
    <property type="project" value="InterPro"/>
</dbReference>
<dbReference type="GO" id="GO:0006006">
    <property type="term" value="P:glucose metabolic process"/>
    <property type="evidence" value="ECO:0000318"/>
    <property type="project" value="GO_Central"/>
</dbReference>
<dbReference type="GO" id="GO:0042823">
    <property type="term" value="P:pyridoxal phosphate biosynthetic process"/>
    <property type="evidence" value="ECO:0007669"/>
    <property type="project" value="UniProtKB-UniRule"/>
</dbReference>
<dbReference type="GO" id="GO:0008615">
    <property type="term" value="P:pyridoxine biosynthetic process"/>
    <property type="evidence" value="ECO:0007669"/>
    <property type="project" value="UniProtKB-UniRule"/>
</dbReference>
<dbReference type="CDD" id="cd23937">
    <property type="entry name" value="GAPDH_C_E4PDH"/>
    <property type="match status" value="1"/>
</dbReference>
<dbReference type="CDD" id="cd17892">
    <property type="entry name" value="GAPDH_N_E4PDH"/>
    <property type="match status" value="1"/>
</dbReference>
<dbReference type="FunFam" id="3.30.360.10:FF:000007">
    <property type="entry name" value="D-erythrose-4-phosphate dehydrogenase"/>
    <property type="match status" value="1"/>
</dbReference>
<dbReference type="FunFam" id="3.40.50.720:FF:000001">
    <property type="entry name" value="Glyceraldehyde-3-phosphate dehydrogenase"/>
    <property type="match status" value="1"/>
</dbReference>
<dbReference type="Gene3D" id="3.30.360.10">
    <property type="entry name" value="Dihydrodipicolinate Reductase, domain 2"/>
    <property type="match status" value="1"/>
</dbReference>
<dbReference type="Gene3D" id="3.40.50.720">
    <property type="entry name" value="NAD(P)-binding Rossmann-like Domain"/>
    <property type="match status" value="1"/>
</dbReference>
<dbReference type="HAMAP" id="MF_01640">
    <property type="entry name" value="E4P_dehydrog"/>
    <property type="match status" value="1"/>
</dbReference>
<dbReference type="InterPro" id="IPR006422">
    <property type="entry name" value="E4P_DH_bac"/>
</dbReference>
<dbReference type="InterPro" id="IPR020831">
    <property type="entry name" value="GlycerAld/Erythrose_P_DH"/>
</dbReference>
<dbReference type="InterPro" id="IPR020830">
    <property type="entry name" value="GlycerAld_3-P_DH_AS"/>
</dbReference>
<dbReference type="InterPro" id="IPR020829">
    <property type="entry name" value="GlycerAld_3-P_DH_cat"/>
</dbReference>
<dbReference type="InterPro" id="IPR020828">
    <property type="entry name" value="GlycerAld_3-P_DH_NAD(P)-bd"/>
</dbReference>
<dbReference type="InterPro" id="IPR006424">
    <property type="entry name" value="Glyceraldehyde-3-P_DH_1"/>
</dbReference>
<dbReference type="InterPro" id="IPR036291">
    <property type="entry name" value="NAD(P)-bd_dom_sf"/>
</dbReference>
<dbReference type="NCBIfam" id="TIGR01532">
    <property type="entry name" value="E4PD_g-proteo"/>
    <property type="match status" value="1"/>
</dbReference>
<dbReference type="NCBIfam" id="TIGR01534">
    <property type="entry name" value="GAPDH-I"/>
    <property type="match status" value="1"/>
</dbReference>
<dbReference type="NCBIfam" id="NF010058">
    <property type="entry name" value="PRK13535.1"/>
    <property type="match status" value="1"/>
</dbReference>
<dbReference type="PANTHER" id="PTHR43148">
    <property type="entry name" value="GLYCERALDEHYDE-3-PHOSPHATE DEHYDROGENASE 2"/>
    <property type="match status" value="1"/>
</dbReference>
<dbReference type="Pfam" id="PF02800">
    <property type="entry name" value="Gp_dh_C"/>
    <property type="match status" value="1"/>
</dbReference>
<dbReference type="Pfam" id="PF00044">
    <property type="entry name" value="Gp_dh_N"/>
    <property type="match status" value="1"/>
</dbReference>
<dbReference type="PIRSF" id="PIRSF000149">
    <property type="entry name" value="GAP_DH"/>
    <property type="match status" value="1"/>
</dbReference>
<dbReference type="PRINTS" id="PR00078">
    <property type="entry name" value="G3PDHDRGNASE"/>
</dbReference>
<dbReference type="SMART" id="SM00846">
    <property type="entry name" value="Gp_dh_N"/>
    <property type="match status" value="1"/>
</dbReference>
<dbReference type="SUPFAM" id="SSF55347">
    <property type="entry name" value="Glyceraldehyde-3-phosphate dehydrogenase-like, C-terminal domain"/>
    <property type="match status" value="1"/>
</dbReference>
<dbReference type="SUPFAM" id="SSF51735">
    <property type="entry name" value="NAD(P)-binding Rossmann-fold domains"/>
    <property type="match status" value="1"/>
</dbReference>
<dbReference type="PROSITE" id="PS00071">
    <property type="entry name" value="GAPDH"/>
    <property type="match status" value="1"/>
</dbReference>
<feature type="chain" id="PRO_0000293159" description="D-erythrose-4-phosphate dehydrogenase">
    <location>
        <begin position="1"/>
        <end position="348"/>
    </location>
</feature>
<feature type="active site" description="Nucleophile" evidence="1">
    <location>
        <position position="155"/>
    </location>
</feature>
<feature type="binding site" evidence="1">
    <location>
        <begin position="12"/>
        <end position="13"/>
    </location>
    <ligand>
        <name>NAD(+)</name>
        <dbReference type="ChEBI" id="CHEBI:57540"/>
    </ligand>
</feature>
<feature type="binding site" evidence="1">
    <location>
        <position position="81"/>
    </location>
    <ligand>
        <name>NAD(+)</name>
        <dbReference type="ChEBI" id="CHEBI:57540"/>
    </ligand>
</feature>
<feature type="binding site" evidence="1">
    <location>
        <begin position="154"/>
        <end position="156"/>
    </location>
    <ligand>
        <name>substrate</name>
    </ligand>
</feature>
<feature type="binding site" evidence="1">
    <location>
        <position position="200"/>
    </location>
    <ligand>
        <name>substrate</name>
    </ligand>
</feature>
<feature type="binding site" evidence="1">
    <location>
        <begin position="213"/>
        <end position="214"/>
    </location>
    <ligand>
        <name>substrate</name>
    </ligand>
</feature>
<feature type="binding site" evidence="1">
    <location>
        <position position="236"/>
    </location>
    <ligand>
        <name>substrate</name>
    </ligand>
</feature>
<feature type="binding site" evidence="1">
    <location>
        <position position="318"/>
    </location>
    <ligand>
        <name>NAD(+)</name>
        <dbReference type="ChEBI" id="CHEBI:57540"/>
    </ligand>
</feature>
<feature type="site" description="Activates thiol group during catalysis" evidence="1">
    <location>
        <position position="182"/>
    </location>
</feature>
<proteinExistence type="inferred from homology"/>
<sequence>MTVRIAINGFGRIGRNVVRALYESGRRAEITVVAINELADAAGMAHLLKYDTSHGRFAWEVRHEREQLFVGDDVIRILHERTLADLPWRELGVDVVLDCTGVYGNREHGEAHIAAGAKKVLFSHPGSNDLDATVVFGVNQNQLRAEHRIVSNASCTTNCIIPVIKLLDDAYGIESGTVTTIHSAMNDQQVIDAYHSDLRRTRAASQSIIPVDTKLAAGITRIFPQFNDRFEAIAVRVPTINVTAIDLSVTVKKPVKASEVNQLLQKAAQGAFHGIVDYTESPLVSIDFNHDPHSAIVDGTQTRVSGAHLIKTLVWCDNEWGFANRMLDTTLAMAAVGFRLDASASTKL</sequence>
<evidence type="ECO:0000255" key="1">
    <source>
        <dbReference type="HAMAP-Rule" id="MF_01640"/>
    </source>
</evidence>
<accession>Q7CPU5</accession>
<comment type="function">
    <text evidence="1">Catalyzes the NAD-dependent conversion of D-erythrose 4-phosphate to 4-phosphoerythronate.</text>
</comment>
<comment type="catalytic activity">
    <reaction evidence="1">
        <text>D-erythrose 4-phosphate + NAD(+) + H2O = 4-phospho-D-erythronate + NADH + 2 H(+)</text>
        <dbReference type="Rhea" id="RHEA:12056"/>
        <dbReference type="ChEBI" id="CHEBI:15377"/>
        <dbReference type="ChEBI" id="CHEBI:15378"/>
        <dbReference type="ChEBI" id="CHEBI:16897"/>
        <dbReference type="ChEBI" id="CHEBI:57540"/>
        <dbReference type="ChEBI" id="CHEBI:57945"/>
        <dbReference type="ChEBI" id="CHEBI:58766"/>
        <dbReference type="EC" id="1.2.1.72"/>
    </reaction>
</comment>
<comment type="pathway">
    <text evidence="1">Cofactor biosynthesis; pyridoxine 5'-phosphate biosynthesis; pyridoxine 5'-phosphate from D-erythrose 4-phosphate: step 1/5.</text>
</comment>
<comment type="subunit">
    <text evidence="1">Homotetramer.</text>
</comment>
<comment type="subcellular location">
    <subcellularLocation>
        <location evidence="1">Cytoplasm</location>
    </subcellularLocation>
</comment>
<comment type="similarity">
    <text evidence="1">Belongs to the glyceraldehyde-3-phosphate dehydrogenase family. Epd subfamily.</text>
</comment>
<name>E4PD_SALTY</name>
<protein>
    <recommendedName>
        <fullName evidence="1">D-erythrose-4-phosphate dehydrogenase</fullName>
        <shortName evidence="1">E4PDH</shortName>
        <ecNumber evidence="1">1.2.1.72</ecNumber>
    </recommendedName>
</protein>
<organism>
    <name type="scientific">Salmonella typhimurium (strain LT2 / SGSC1412 / ATCC 700720)</name>
    <dbReference type="NCBI Taxonomy" id="99287"/>
    <lineage>
        <taxon>Bacteria</taxon>
        <taxon>Pseudomonadati</taxon>
        <taxon>Pseudomonadota</taxon>
        <taxon>Gammaproteobacteria</taxon>
        <taxon>Enterobacterales</taxon>
        <taxon>Enterobacteriaceae</taxon>
        <taxon>Salmonella</taxon>
    </lineage>
</organism>
<keyword id="KW-0963">Cytoplasm</keyword>
<keyword id="KW-0520">NAD</keyword>
<keyword id="KW-0560">Oxidoreductase</keyword>
<keyword id="KW-0664">Pyridoxine biosynthesis</keyword>
<keyword id="KW-1185">Reference proteome</keyword>
<reference key="1">
    <citation type="journal article" date="2001" name="Nature">
        <title>Complete genome sequence of Salmonella enterica serovar Typhimurium LT2.</title>
        <authorList>
            <person name="McClelland M."/>
            <person name="Sanderson K.E."/>
            <person name="Spieth J."/>
            <person name="Clifton S.W."/>
            <person name="Latreille P."/>
            <person name="Courtney L."/>
            <person name="Porwollik S."/>
            <person name="Ali J."/>
            <person name="Dante M."/>
            <person name="Du F."/>
            <person name="Hou S."/>
            <person name="Layman D."/>
            <person name="Leonard S."/>
            <person name="Nguyen C."/>
            <person name="Scott K."/>
            <person name="Holmes A."/>
            <person name="Grewal N."/>
            <person name="Mulvaney E."/>
            <person name="Ryan E."/>
            <person name="Sun H."/>
            <person name="Florea L."/>
            <person name="Miller W."/>
            <person name="Stoneking T."/>
            <person name="Nhan M."/>
            <person name="Waterston R."/>
            <person name="Wilson R.K."/>
        </authorList>
    </citation>
    <scope>NUCLEOTIDE SEQUENCE [LARGE SCALE GENOMIC DNA]</scope>
    <source>
        <strain>LT2 / SGSC1412 / ATCC 700720</strain>
    </source>
</reference>